<gene>
    <name type="primary">LCL3</name>
    <name type="ordered locus">CGB_D5120C</name>
</gene>
<proteinExistence type="inferred from homology"/>
<evidence type="ECO:0000250" key="1"/>
<evidence type="ECO:0000255" key="2"/>
<evidence type="ECO:0000255" key="3">
    <source>
        <dbReference type="PROSITE-ProRule" id="PRU00272"/>
    </source>
</evidence>
<evidence type="ECO:0000256" key="4">
    <source>
        <dbReference type="SAM" id="MobiDB-lite"/>
    </source>
</evidence>
<evidence type="ECO:0000305" key="5"/>
<name>LCL3_CRYGW</name>
<dbReference type="EC" id="3.1.-.-"/>
<dbReference type="EMBL" id="CP000289">
    <property type="protein sequence ID" value="ADV21914.1"/>
    <property type="molecule type" value="Genomic_DNA"/>
</dbReference>
<dbReference type="RefSeq" id="XP_003193701.1">
    <property type="nucleotide sequence ID" value="XM_003193653.1"/>
</dbReference>
<dbReference type="SMR" id="E6R427"/>
<dbReference type="GeneID" id="10191399"/>
<dbReference type="KEGG" id="cgi:CGB_D5120C"/>
<dbReference type="VEuPathDB" id="FungiDB:CGB_D5120C"/>
<dbReference type="eggNOG" id="ENOG502S1U4">
    <property type="taxonomic scope" value="Eukaryota"/>
</dbReference>
<dbReference type="HOGENOM" id="CLU_046484_0_1_1"/>
<dbReference type="OrthoDB" id="430293at2759"/>
<dbReference type="Proteomes" id="UP000007805">
    <property type="component" value="Chromosome D"/>
</dbReference>
<dbReference type="GO" id="GO:0016020">
    <property type="term" value="C:membrane"/>
    <property type="evidence" value="ECO:0007669"/>
    <property type="project" value="UniProtKB-SubCell"/>
</dbReference>
<dbReference type="GO" id="GO:0005739">
    <property type="term" value="C:mitochondrion"/>
    <property type="evidence" value="ECO:0007669"/>
    <property type="project" value="UniProtKB-SubCell"/>
</dbReference>
<dbReference type="GO" id="GO:0004519">
    <property type="term" value="F:endonuclease activity"/>
    <property type="evidence" value="ECO:0007669"/>
    <property type="project" value="UniProtKB-KW"/>
</dbReference>
<dbReference type="GO" id="GO:0046872">
    <property type="term" value="F:metal ion binding"/>
    <property type="evidence" value="ECO:0007669"/>
    <property type="project" value="UniProtKB-KW"/>
</dbReference>
<dbReference type="FunFam" id="2.40.50.90:FF:000029">
    <property type="entry name" value="Probable endonuclease lcl3"/>
    <property type="match status" value="1"/>
</dbReference>
<dbReference type="Gene3D" id="2.40.50.90">
    <property type="match status" value="1"/>
</dbReference>
<dbReference type="InterPro" id="IPR035437">
    <property type="entry name" value="SNase_OB-fold_sf"/>
</dbReference>
<dbReference type="InterPro" id="IPR016071">
    <property type="entry name" value="Staphylococal_nuclease_OB-fold"/>
</dbReference>
<dbReference type="PANTHER" id="PTHR12302">
    <property type="entry name" value="EBNA2 BINDING PROTEIN P100"/>
    <property type="match status" value="1"/>
</dbReference>
<dbReference type="PANTHER" id="PTHR12302:SF3">
    <property type="entry name" value="SERINE_THREONINE-PROTEIN KINASE 31"/>
    <property type="match status" value="1"/>
</dbReference>
<dbReference type="Pfam" id="PF00565">
    <property type="entry name" value="SNase"/>
    <property type="match status" value="1"/>
</dbReference>
<dbReference type="SMART" id="SM00318">
    <property type="entry name" value="SNc"/>
    <property type="match status" value="1"/>
</dbReference>
<dbReference type="SUPFAM" id="SSF50199">
    <property type="entry name" value="Staphylococcal nuclease"/>
    <property type="match status" value="1"/>
</dbReference>
<dbReference type="PROSITE" id="PS50830">
    <property type="entry name" value="TNASE_3"/>
    <property type="match status" value="1"/>
</dbReference>
<sequence length="286" mass="32403">MSGSYSPQKDPQHPTQHQQFPPTPPYPSSSVWSGNLGENPVFIGIGSAAGASALTLLGVMGYRRYWKRIKNADYVTSELLRRRAWIKGIVTSVGDGDNLRLYHTPGPFFRYPFKIRSIPTTQKGLRNETISIRIAGVDAPENAHFGNPAQPHAKESLEWLRATILGKRMRCQLLAKDQYNRIVAVPYISRRLWWDRPLPLMMLKEGMAVVYKAGGAEYGPWGLDEMLKVEAEARDAKRGLWALRKFESPGDFKARMKLKSDVSEERPEKKSPSGWIALVKRLIRRT</sequence>
<keyword id="KW-0106">Calcium</keyword>
<keyword id="KW-0255">Endonuclease</keyword>
<keyword id="KW-0378">Hydrolase</keyword>
<keyword id="KW-0472">Membrane</keyword>
<keyword id="KW-0479">Metal-binding</keyword>
<keyword id="KW-0496">Mitochondrion</keyword>
<keyword id="KW-0540">Nuclease</keyword>
<keyword id="KW-0812">Transmembrane</keyword>
<keyword id="KW-1133">Transmembrane helix</keyword>
<reference key="1">
    <citation type="journal article" date="2011" name="MBio">
        <title>Genome variation in Cryptococcus gattii, an emerging pathogen of immunocompetent hosts.</title>
        <authorList>
            <person name="D'Souza C.A."/>
            <person name="Kronstad J.W."/>
            <person name="Taylor G."/>
            <person name="Warren R."/>
            <person name="Yuen M."/>
            <person name="Hu G."/>
            <person name="Jung W.H."/>
            <person name="Sham A."/>
            <person name="Kidd S.E."/>
            <person name="Tangen K."/>
            <person name="Lee N."/>
            <person name="Zeilmaker T."/>
            <person name="Sawkins J."/>
            <person name="McVicker G."/>
            <person name="Shah S."/>
            <person name="Gnerre S."/>
            <person name="Griggs A."/>
            <person name="Zeng Q."/>
            <person name="Bartlett K."/>
            <person name="Li W."/>
            <person name="Wang X."/>
            <person name="Heitman J."/>
            <person name="Stajich J.E."/>
            <person name="Fraser J.A."/>
            <person name="Meyer W."/>
            <person name="Carter D."/>
            <person name="Schein J."/>
            <person name="Krzywinski M."/>
            <person name="Kwon-Chung K.J."/>
            <person name="Varma A."/>
            <person name="Wang J."/>
            <person name="Brunham R."/>
            <person name="Fyfe M."/>
            <person name="Ouellette B.F.F."/>
            <person name="Siddiqui A."/>
            <person name="Marra M."/>
            <person name="Jones S."/>
            <person name="Holt R."/>
            <person name="Birren B.W."/>
            <person name="Galagan J.E."/>
            <person name="Cuomo C.A."/>
        </authorList>
    </citation>
    <scope>NUCLEOTIDE SEQUENCE [LARGE SCALE GENOMIC DNA]</scope>
    <source>
        <strain>WM276 / ATCC MYA-4071</strain>
    </source>
</reference>
<comment type="subcellular location">
    <subcellularLocation>
        <location>Mitochondrion</location>
    </subcellularLocation>
    <subcellularLocation>
        <location evidence="1">Membrane</location>
        <topology evidence="1">Single-pass membrane protein</topology>
    </subcellularLocation>
</comment>
<comment type="similarity">
    <text evidence="5">Belongs to the LCL3 family.</text>
</comment>
<protein>
    <recommendedName>
        <fullName>Probable endonuclease LCL3</fullName>
        <ecNumber>3.1.-.-</ecNumber>
    </recommendedName>
</protein>
<feature type="chain" id="PRO_0000408658" description="Probable endonuclease LCL3">
    <location>
        <begin position="1"/>
        <end position="286"/>
    </location>
</feature>
<feature type="transmembrane region" description="Helical" evidence="2">
    <location>
        <begin position="41"/>
        <end position="61"/>
    </location>
</feature>
<feature type="domain" description="TNase-like" evidence="3">
    <location>
        <begin position="84"/>
        <end position="243"/>
    </location>
</feature>
<feature type="region of interest" description="Disordered" evidence="4">
    <location>
        <begin position="1"/>
        <end position="29"/>
    </location>
</feature>
<feature type="active site" evidence="3">
    <location>
        <position position="133"/>
    </location>
</feature>
<feature type="active site" evidence="3">
    <location>
        <position position="141"/>
    </location>
</feature>
<feature type="active site" evidence="3">
    <location>
        <position position="181"/>
    </location>
</feature>
<feature type="binding site" evidence="3">
    <location>
        <position position="138"/>
    </location>
    <ligand>
        <name>Ca(2+)</name>
        <dbReference type="ChEBI" id="CHEBI:29108"/>
    </ligand>
</feature>
<organism>
    <name type="scientific">Cryptococcus gattii serotype B (strain WM276 / ATCC MYA-4071)</name>
    <name type="common">Filobasidiella gattii</name>
    <name type="synonym">Cryptococcus bacillisporus</name>
    <dbReference type="NCBI Taxonomy" id="367775"/>
    <lineage>
        <taxon>Eukaryota</taxon>
        <taxon>Fungi</taxon>
        <taxon>Dikarya</taxon>
        <taxon>Basidiomycota</taxon>
        <taxon>Agaricomycotina</taxon>
        <taxon>Tremellomycetes</taxon>
        <taxon>Tremellales</taxon>
        <taxon>Cryptococcaceae</taxon>
        <taxon>Cryptococcus</taxon>
        <taxon>Cryptococcus gattii species complex</taxon>
    </lineage>
</organism>
<accession>E6R427</accession>